<organism>
    <name type="scientific">Woodchuck hepatitis B virus (isolate 7)</name>
    <name type="common">WHV</name>
    <dbReference type="NCBI Taxonomy" id="10432"/>
    <lineage>
        <taxon>Viruses</taxon>
        <taxon>Riboviria</taxon>
        <taxon>Pararnavirae</taxon>
        <taxon>Artverviricota</taxon>
        <taxon>Revtraviricetes</taxon>
        <taxon>Blubervirales</taxon>
        <taxon>Hepadnaviridae</taxon>
        <taxon>Orthohepadnavirus</taxon>
        <taxon>Woodchuck hepatitis virus</taxon>
    </lineage>
</organism>
<name>DPOL_WHV4</name>
<gene>
    <name evidence="1" type="primary">P</name>
</gene>
<proteinExistence type="inferred from homology"/>
<keyword id="KW-0235">DNA replication</keyword>
<keyword id="KW-0238">DNA-binding</keyword>
<keyword id="KW-0239">DNA-directed DNA polymerase</keyword>
<keyword id="KW-0255">Endonuclease</keyword>
<keyword id="KW-0945">Host-virus interaction</keyword>
<keyword id="KW-0378">Hydrolase</keyword>
<keyword id="KW-1090">Inhibition of host innate immune response by virus</keyword>
<keyword id="KW-1113">Inhibition of host RLR pathway by virus</keyword>
<keyword id="KW-0460">Magnesium</keyword>
<keyword id="KW-0479">Metal-binding</keyword>
<keyword id="KW-0511">Multifunctional enzyme</keyword>
<keyword id="KW-0540">Nuclease</keyword>
<keyword id="KW-0548">Nucleotidyltransferase</keyword>
<keyword id="KW-0695">RNA-directed DNA polymerase</keyword>
<keyword id="KW-0808">Transferase</keyword>
<keyword id="KW-0899">Viral immunoevasion</keyword>
<dbReference type="EC" id="2.7.7.7" evidence="1"/>
<dbReference type="EC" id="2.7.7.49" evidence="1"/>
<dbReference type="EC" id="3.1.26.4" evidence="1"/>
<dbReference type="EMBL" id="M18752">
    <property type="protein sequence ID" value="AAA46767.1"/>
    <property type="molecule type" value="Genomic_DNA"/>
</dbReference>
<dbReference type="PIR" id="C29969">
    <property type="entry name" value="JDVL7"/>
</dbReference>
<dbReference type="RefSeq" id="NP_671813.1">
    <property type="nucleotide sequence ID" value="NC_004107.1"/>
</dbReference>
<dbReference type="KEGG" id="vg:2546421"/>
<dbReference type="Proteomes" id="UP000008598">
    <property type="component" value="Segment"/>
</dbReference>
<dbReference type="GO" id="GO:0003677">
    <property type="term" value="F:DNA binding"/>
    <property type="evidence" value="ECO:0007669"/>
    <property type="project" value="UniProtKB-UniRule"/>
</dbReference>
<dbReference type="GO" id="GO:0003887">
    <property type="term" value="F:DNA-directed DNA polymerase activity"/>
    <property type="evidence" value="ECO:0007669"/>
    <property type="project" value="UniProtKB-UniRule"/>
</dbReference>
<dbReference type="GO" id="GO:0046872">
    <property type="term" value="F:metal ion binding"/>
    <property type="evidence" value="ECO:0007669"/>
    <property type="project" value="UniProtKB-UniRule"/>
</dbReference>
<dbReference type="GO" id="GO:0003964">
    <property type="term" value="F:RNA-directed DNA polymerase activity"/>
    <property type="evidence" value="ECO:0007669"/>
    <property type="project" value="UniProtKB-UniRule"/>
</dbReference>
<dbReference type="GO" id="GO:0004523">
    <property type="term" value="F:RNA-DNA hybrid ribonuclease activity"/>
    <property type="evidence" value="ECO:0007669"/>
    <property type="project" value="UniProtKB-UniRule"/>
</dbReference>
<dbReference type="GO" id="GO:0006260">
    <property type="term" value="P:DNA replication"/>
    <property type="evidence" value="ECO:0007669"/>
    <property type="project" value="UniProtKB-UniRule"/>
</dbReference>
<dbReference type="GO" id="GO:0052170">
    <property type="term" value="P:symbiont-mediated suppression of host innate immune response"/>
    <property type="evidence" value="ECO:0007669"/>
    <property type="project" value="UniProtKB-UniRule"/>
</dbReference>
<dbReference type="Gene3D" id="3.30.70.270">
    <property type="match status" value="1"/>
</dbReference>
<dbReference type="HAMAP" id="MF_04073">
    <property type="entry name" value="HBV_DPOL"/>
    <property type="match status" value="1"/>
</dbReference>
<dbReference type="InterPro" id="IPR043502">
    <property type="entry name" value="DNA/RNA_pol_sf"/>
</dbReference>
<dbReference type="InterPro" id="IPR001462">
    <property type="entry name" value="DNApol_viral_C"/>
</dbReference>
<dbReference type="InterPro" id="IPR000201">
    <property type="entry name" value="DNApol_viral_N"/>
</dbReference>
<dbReference type="InterPro" id="IPR037531">
    <property type="entry name" value="HBV_DPOL"/>
</dbReference>
<dbReference type="InterPro" id="IPR052055">
    <property type="entry name" value="Hepadnavirus_pol/RT"/>
</dbReference>
<dbReference type="InterPro" id="IPR043128">
    <property type="entry name" value="Rev_trsase/Diguanyl_cyclase"/>
</dbReference>
<dbReference type="InterPro" id="IPR000477">
    <property type="entry name" value="RT_dom"/>
</dbReference>
<dbReference type="PANTHER" id="PTHR33050">
    <property type="entry name" value="REVERSE TRANSCRIPTASE DOMAIN-CONTAINING PROTEIN"/>
    <property type="match status" value="1"/>
</dbReference>
<dbReference type="PANTHER" id="PTHR33050:SF7">
    <property type="entry name" value="RIBONUCLEASE H"/>
    <property type="match status" value="1"/>
</dbReference>
<dbReference type="Pfam" id="PF00336">
    <property type="entry name" value="DNA_pol_viral_C"/>
    <property type="match status" value="1"/>
</dbReference>
<dbReference type="Pfam" id="PF00242">
    <property type="entry name" value="DNA_pol_viral_N"/>
    <property type="match status" value="1"/>
</dbReference>
<dbReference type="Pfam" id="PF00078">
    <property type="entry name" value="RVT_1"/>
    <property type="match status" value="1"/>
</dbReference>
<dbReference type="SUPFAM" id="SSF56672">
    <property type="entry name" value="DNA/RNA polymerases"/>
    <property type="match status" value="1"/>
</dbReference>
<dbReference type="PROSITE" id="PS50878">
    <property type="entry name" value="RT_POL"/>
    <property type="match status" value="1"/>
</dbReference>
<protein>
    <recommendedName>
        <fullName evidence="1">Protein P</fullName>
    </recommendedName>
    <domain>
        <recommendedName>
            <fullName evidence="1">DNA-directed DNA polymerase</fullName>
            <ecNumber evidence="1">2.7.7.7</ecNumber>
        </recommendedName>
    </domain>
    <domain>
        <recommendedName>
            <fullName evidence="1">RNA-directed DNA polymerase</fullName>
            <ecNumber evidence="1">2.7.7.49</ecNumber>
        </recommendedName>
    </domain>
    <domain>
        <recommendedName>
            <fullName evidence="1">Ribonuclease H</fullName>
            <ecNumber evidence="1">3.1.26.4</ecNumber>
        </recommendedName>
    </domain>
</protein>
<comment type="function">
    <text evidence="1">Multifunctional enzyme that converts the viral RNA genome into dsDNA in viral cytoplasmic capsids. This enzyme displays a DNA polymerase activity that can copy either DNA or RNA templates, and a ribonuclease H (RNase H) activity that cleaves the RNA strand of RNA-DNA heteroduplexes in a partially processive 3'- to 5'-endonucleasic mode. Neo-synthesized pregenomic RNA (pgRNA) are encapsidated together with the P protein, and reverse-transcribed inside the nucleocapsid. Initiation of reverse-transcription occurs first by binding the epsilon loop on the pgRNA genome, and is initiated by protein priming, thereby the 5'-end of (-)DNA is covalently linked to P protein. Partial (+)DNA is synthesized from the (-)DNA template and generates the relaxed circular DNA (RC-DNA) genome. After budding and infection, the RC-DNA migrates in the nucleus, and is converted into a plasmid-like covalently closed circular DNA (cccDNA). The activity of P protein does not seem to be necessary for cccDNA generation, and is presumably released from (+)DNA by host nuclear DNA repair machinery.</text>
</comment>
<comment type="catalytic activity">
    <reaction evidence="1">
        <text>DNA(n) + a 2'-deoxyribonucleoside 5'-triphosphate = DNA(n+1) + diphosphate</text>
        <dbReference type="Rhea" id="RHEA:22508"/>
        <dbReference type="Rhea" id="RHEA-COMP:17339"/>
        <dbReference type="Rhea" id="RHEA-COMP:17340"/>
        <dbReference type="ChEBI" id="CHEBI:33019"/>
        <dbReference type="ChEBI" id="CHEBI:61560"/>
        <dbReference type="ChEBI" id="CHEBI:173112"/>
        <dbReference type="EC" id="2.7.7.7"/>
    </reaction>
</comment>
<comment type="catalytic activity">
    <reaction evidence="1">
        <text>DNA(n) + a 2'-deoxyribonucleoside 5'-triphosphate = DNA(n+1) + diphosphate</text>
        <dbReference type="Rhea" id="RHEA:22508"/>
        <dbReference type="Rhea" id="RHEA-COMP:17339"/>
        <dbReference type="Rhea" id="RHEA-COMP:17340"/>
        <dbReference type="ChEBI" id="CHEBI:33019"/>
        <dbReference type="ChEBI" id="CHEBI:61560"/>
        <dbReference type="ChEBI" id="CHEBI:173112"/>
        <dbReference type="EC" id="2.7.7.49"/>
    </reaction>
</comment>
<comment type="catalytic activity">
    <reaction evidence="1">
        <text>Endonucleolytic cleavage to 5'-phosphomonoester.</text>
        <dbReference type="EC" id="3.1.26.4"/>
    </reaction>
</comment>
<comment type="activity regulation">
    <text evidence="1">Activated by host HSP70 and HSP40 in vitro to be able to bind the epsilon loop of the pgRNA. Because deletion of the RNase H region renders the protein partly chaperone-independent, the chaperones may be needed indirectly to relieve occlusion of the RNA-binding site by this domain. Inhibited by several reverse-transcriptase inhibitors: Lamivudine, Adefovir and Entecavir.</text>
</comment>
<comment type="domain">
    <text evidence="1">Terminal protein domain (TP) is hepadnavirus-specific. Spacer domain is highly variable and separates the TP and RT domains. Polymerase/reverse-transcriptase domain (RT) and ribonuclease H domain (RH) are similar to retrovirus reverse transcriptase/RNase H.</text>
</comment>
<comment type="domain">
    <text evidence="1">The polymerase/reverse transcriptase (RT) and ribonuclease H (RH) domains are structured in five subdomains: finger, palm, thumb, connection and RNase H. Within the palm subdomain, the 'primer grip' region is thought to be involved in the positioning of the primer terminus for accommodating the incoming nucleotide. The RH domain stabilizes the association of RT with primer-template.</text>
</comment>
<comment type="miscellaneous">
    <text evidence="1">Hepadnaviral virions contain probably just one P protein molecule per particle.</text>
</comment>
<comment type="similarity">
    <text evidence="1">Belongs to the hepadnaviridae P protein family.</text>
</comment>
<sequence length="884" mass="99733">MHPFSRLFRNIQSLGEEEVQELLGPPEDALPLLAGEDLNHRVADALNLHLPTADLQWVHKTNAITGLYSNQAAQFNPHWIQPEFPELHLHNDLIQKLQQYFGPLTINEKRKLQLNFPARFFPKATKYFPLIKGIKNNYPNFALEHFFATANYLWTLWEAGILYLRKNQTTLTFKGKPYSWEHRQLVQHNGQQHKSHLQSRQNSSMVACSGHLLHNHLSSESVSVSTRNLSNNISDKSQKSTRTGLCSYKQIQTDRLEHLARISCGSKITIGQQGSSPKTLYKSISSNFRNQTWAYNSSRNSGHTTWFSSASNSNKSRSREKAYSSNSTSKRYSPPLNYEKSDFSSPGVRRRITRLDNNGTPTQCLWRSFYNTKPCGSYCIHHIVSSLDDWGPCTVTGDVTIKSPRTPRRITGGVFLVDKNPNNSSESRLVVDFSQFSRGHTRVHWPKFAVPNLQTLANLLSTNLQWLSLDVSAAFYHIPISPAAVPHLLVGSPGLERFNTCLSSSTHNRNNSQLQTMHNLCTRHVYSSLLLLFKTYGRKLHLLAHPFIMGFRKLPMGVGLSPFLLAQFTSALASMVRRNFPHCVVFAYMDDLVLGARTSEHLTAIYSHICSVFLDLGIHLNVNKTKWWGNHLHFMGYVITSSGVLPQDKHVKKISRYLRSVPVNQPLDYKICERLTGILNYVAPFTLCGYAALMPLYHAITSRTAFIFSSLYKSWLLSLYEELWPVVRQRGVVCTVFADATPTGWGIATTYQLLSGTFAFPLPIATAELIAACLARCWTGARLLGTDNSVVLSGKLTSFPWLLACVANWILRGTSFCYVPSALNPADLPSRGLLPVLRPLPRLRLRPQTSRISLWAASPPVSPRRPVRVAWSSPVQNCEPWIPP</sequence>
<organismHost>
    <name type="scientific">Marmota monax</name>
    <name type="common">Woodchuck</name>
    <dbReference type="NCBI Taxonomy" id="9995"/>
</organismHost>
<feature type="chain" id="PRO_0000222349" description="Protein P">
    <location>
        <begin position="1"/>
        <end position="884"/>
    </location>
</feature>
<feature type="domain" description="Reverse transcriptase" evidence="1">
    <location>
        <begin position="398"/>
        <end position="639"/>
    </location>
</feature>
<feature type="region of interest" description="Terminal protein domain (TP)" evidence="1">
    <location>
        <begin position="1"/>
        <end position="184"/>
    </location>
</feature>
<feature type="region of interest" description="Spacer" evidence="1">
    <location>
        <begin position="185"/>
        <end position="387"/>
    </location>
</feature>
<feature type="region of interest" description="Disordered" evidence="2">
    <location>
        <begin position="299"/>
        <end position="345"/>
    </location>
</feature>
<feature type="region of interest" description="Polymerase/reverse transcriptase domain (RT)" evidence="1">
    <location>
        <begin position="388"/>
        <end position="729"/>
    </location>
</feature>
<feature type="binding site" evidence="1">
    <location>
        <position position="470"/>
    </location>
    <ligand>
        <name>Mg(2+)</name>
        <dbReference type="ChEBI" id="CHEBI:18420"/>
        <note>catalytic</note>
    </ligand>
</feature>
<feature type="binding site" evidence="1">
    <location>
        <position position="590"/>
    </location>
    <ligand>
        <name>Mg(2+)</name>
        <dbReference type="ChEBI" id="CHEBI:18420"/>
        <note>catalytic</note>
    </ligand>
</feature>
<feature type="binding site" evidence="1">
    <location>
        <position position="591"/>
    </location>
    <ligand>
        <name>Mg(2+)</name>
        <dbReference type="ChEBI" id="CHEBI:18420"/>
        <note>catalytic</note>
    </ligand>
</feature>
<feature type="site" description="Priming of reverse-transcription by covalently linking the first nucleotide of the (-)DNA" evidence="1">
    <location>
        <position position="68"/>
    </location>
</feature>
<evidence type="ECO:0000255" key="1">
    <source>
        <dbReference type="HAMAP-Rule" id="MF_04073"/>
    </source>
</evidence>
<evidence type="ECO:0000256" key="2">
    <source>
        <dbReference type="SAM" id="MobiDB-lite"/>
    </source>
</evidence>
<accession>P12898</accession>
<reference key="1">
    <citation type="journal article" date="1988" name="Virology">
        <title>Sequence comparison of woodchuck hepatitis virus replicative forms shows conservation of the genome.</title>
        <authorList>
            <person name="Cohen J.I."/>
            <person name="Miller R.H."/>
            <person name="Rosenblum B."/>
            <person name="Denniston K."/>
            <person name="Gerin J.L."/>
            <person name="Purcell R.H."/>
        </authorList>
    </citation>
    <scope>NUCLEOTIDE SEQUENCE [GENOMIC DNA]</scope>
</reference>
<reference key="2">
    <citation type="journal article" date="2007" name="World J. Gastroenterol.">
        <title>Hepatitis B virus replication.</title>
        <authorList>
            <person name="Beck J."/>
            <person name="Nassal M."/>
        </authorList>
    </citation>
    <scope>REVIEW</scope>
</reference>